<protein>
    <recommendedName>
        <fullName evidence="1">ATP-dependent protease ATPase subunit HslU</fullName>
    </recommendedName>
    <alternativeName>
        <fullName evidence="1">Unfoldase HslU</fullName>
    </alternativeName>
</protein>
<reference key="1">
    <citation type="journal article" date="2006" name="Genome Res.">
        <title>Massive genome erosion and functional adaptations provide insights into the symbiotic lifestyle of Sodalis glossinidius in the tsetse host.</title>
        <authorList>
            <person name="Toh H."/>
            <person name="Weiss B.L."/>
            <person name="Perkin S.A.H."/>
            <person name="Yamashita A."/>
            <person name="Oshima K."/>
            <person name="Hattori M."/>
            <person name="Aksoy S."/>
        </authorList>
    </citation>
    <scope>NUCLEOTIDE SEQUENCE [LARGE SCALE GENOMIC DNA]</scope>
    <source>
        <strain>morsitans</strain>
    </source>
</reference>
<name>HSLU_SODGM</name>
<feature type="chain" id="PRO_1000012816" description="ATP-dependent protease ATPase subunit HslU">
    <location>
        <begin position="1"/>
        <end position="443"/>
    </location>
</feature>
<feature type="region of interest" description="Disordered" evidence="2">
    <location>
        <begin position="139"/>
        <end position="160"/>
    </location>
</feature>
<feature type="binding site" evidence="1">
    <location>
        <position position="18"/>
    </location>
    <ligand>
        <name>ATP</name>
        <dbReference type="ChEBI" id="CHEBI:30616"/>
    </ligand>
</feature>
<feature type="binding site" evidence="1">
    <location>
        <begin position="60"/>
        <end position="65"/>
    </location>
    <ligand>
        <name>ATP</name>
        <dbReference type="ChEBI" id="CHEBI:30616"/>
    </ligand>
</feature>
<feature type="binding site" evidence="1">
    <location>
        <position position="256"/>
    </location>
    <ligand>
        <name>ATP</name>
        <dbReference type="ChEBI" id="CHEBI:30616"/>
    </ligand>
</feature>
<feature type="binding site" evidence="1">
    <location>
        <position position="321"/>
    </location>
    <ligand>
        <name>ATP</name>
        <dbReference type="ChEBI" id="CHEBI:30616"/>
    </ligand>
</feature>
<feature type="binding site" evidence="1">
    <location>
        <position position="393"/>
    </location>
    <ligand>
        <name>ATP</name>
        <dbReference type="ChEBI" id="CHEBI:30616"/>
    </ligand>
</feature>
<comment type="function">
    <text evidence="1">ATPase subunit of a proteasome-like degradation complex; this subunit has chaperone activity. The binding of ATP and its subsequent hydrolysis by HslU are essential for unfolding of protein substrates subsequently hydrolyzed by HslV. HslU recognizes the N-terminal part of its protein substrates and unfolds these before they are guided to HslV for hydrolysis.</text>
</comment>
<comment type="subunit">
    <text evidence="1">A double ring-shaped homohexamer of HslV is capped on each side by a ring-shaped HslU homohexamer. The assembly of the HslU/HslV complex is dependent on binding of ATP.</text>
</comment>
<comment type="subcellular location">
    <subcellularLocation>
        <location evidence="1">Cytoplasm</location>
    </subcellularLocation>
</comment>
<comment type="similarity">
    <text evidence="1">Belongs to the ClpX chaperone family. HslU subfamily.</text>
</comment>
<gene>
    <name evidence="1" type="primary">hslU</name>
    <name type="ordered locus">SG2169</name>
</gene>
<organism>
    <name type="scientific">Sodalis glossinidius (strain morsitans)</name>
    <dbReference type="NCBI Taxonomy" id="343509"/>
    <lineage>
        <taxon>Bacteria</taxon>
        <taxon>Pseudomonadati</taxon>
        <taxon>Pseudomonadota</taxon>
        <taxon>Gammaproteobacteria</taxon>
        <taxon>Enterobacterales</taxon>
        <taxon>Bruguierivoracaceae</taxon>
        <taxon>Sodalis</taxon>
    </lineage>
</organism>
<sequence length="443" mass="49715">MSEMTPREIVSELDGYIVGQHNAKRAVAIALRNRWRRMQLDEALRHEVTPKNILMIGPTGVGKTEIARRLAKLANAPFIKVEATKFTEVGYVGKEVDSIIRDLTDAAVKMVRLQSIEQNRFRAEELAEERVLDVLIPPAKNNWGQPEESGEPSSARQNFRKKLREGQLDEKEIEINLAAAPMGVEIMAPPGMEEMTNQLQSMFKNLAGQKQKPRKIKIKEAMKLLVEEEAAKLVNPEELKEKAIEAVEQHGIVFIDEIDKICKRDEVSGLDVSREGVQRDLLPLVEGCTVSTKHGMVKTDHILFIASGAFQVSSPSDLIPELQGRLPIRVELEALTTEDFERILTEPSASLTTQYIALMATEGVSITFTEDGIKRIAEAAWQVNECTENIGARRLHTVLERLMEDISYDASEWNGKTISIDADYVHGHLDELVSDEDLSRFIL</sequence>
<accession>Q2NQY1</accession>
<evidence type="ECO:0000255" key="1">
    <source>
        <dbReference type="HAMAP-Rule" id="MF_00249"/>
    </source>
</evidence>
<evidence type="ECO:0000256" key="2">
    <source>
        <dbReference type="SAM" id="MobiDB-lite"/>
    </source>
</evidence>
<dbReference type="EMBL" id="AP008232">
    <property type="protein sequence ID" value="BAE75444.1"/>
    <property type="molecule type" value="Genomic_DNA"/>
</dbReference>
<dbReference type="RefSeq" id="WP_011411981.1">
    <property type="nucleotide sequence ID" value="NC_007712.1"/>
</dbReference>
<dbReference type="SMR" id="Q2NQY1"/>
<dbReference type="STRING" id="343509.SG2169"/>
<dbReference type="KEGG" id="sgl:SG2169"/>
<dbReference type="eggNOG" id="COG1220">
    <property type="taxonomic scope" value="Bacteria"/>
</dbReference>
<dbReference type="HOGENOM" id="CLU_033123_0_0_6"/>
<dbReference type="OrthoDB" id="9804062at2"/>
<dbReference type="BioCyc" id="SGLO343509:SGP1_RS20020-MONOMER"/>
<dbReference type="Proteomes" id="UP000001932">
    <property type="component" value="Chromosome"/>
</dbReference>
<dbReference type="GO" id="GO:0009376">
    <property type="term" value="C:HslUV protease complex"/>
    <property type="evidence" value="ECO:0007669"/>
    <property type="project" value="UniProtKB-UniRule"/>
</dbReference>
<dbReference type="GO" id="GO:0005524">
    <property type="term" value="F:ATP binding"/>
    <property type="evidence" value="ECO:0007669"/>
    <property type="project" value="UniProtKB-UniRule"/>
</dbReference>
<dbReference type="GO" id="GO:0016887">
    <property type="term" value="F:ATP hydrolysis activity"/>
    <property type="evidence" value="ECO:0007669"/>
    <property type="project" value="InterPro"/>
</dbReference>
<dbReference type="GO" id="GO:0008233">
    <property type="term" value="F:peptidase activity"/>
    <property type="evidence" value="ECO:0007669"/>
    <property type="project" value="InterPro"/>
</dbReference>
<dbReference type="GO" id="GO:0036402">
    <property type="term" value="F:proteasome-activating activity"/>
    <property type="evidence" value="ECO:0007669"/>
    <property type="project" value="UniProtKB-UniRule"/>
</dbReference>
<dbReference type="GO" id="GO:0043335">
    <property type="term" value="P:protein unfolding"/>
    <property type="evidence" value="ECO:0007669"/>
    <property type="project" value="UniProtKB-UniRule"/>
</dbReference>
<dbReference type="GO" id="GO:0051603">
    <property type="term" value="P:proteolysis involved in protein catabolic process"/>
    <property type="evidence" value="ECO:0007669"/>
    <property type="project" value="TreeGrafter"/>
</dbReference>
<dbReference type="CDD" id="cd19498">
    <property type="entry name" value="RecA-like_HslU"/>
    <property type="match status" value="1"/>
</dbReference>
<dbReference type="FunFam" id="1.10.8.10:FF:000028">
    <property type="entry name" value="ATP-dependent protease ATPase subunit HslU"/>
    <property type="match status" value="2"/>
</dbReference>
<dbReference type="FunFam" id="1.10.8.60:FF:000027">
    <property type="entry name" value="ATP-dependent protease ATPase subunit HslU"/>
    <property type="match status" value="1"/>
</dbReference>
<dbReference type="FunFam" id="3.40.50.300:FF:000213">
    <property type="entry name" value="ATP-dependent protease ATPase subunit HslU"/>
    <property type="match status" value="1"/>
</dbReference>
<dbReference type="FunFam" id="3.40.50.300:FF:000220">
    <property type="entry name" value="ATP-dependent protease ATPase subunit HslU"/>
    <property type="match status" value="1"/>
</dbReference>
<dbReference type="Gene3D" id="1.10.8.60">
    <property type="match status" value="1"/>
</dbReference>
<dbReference type="Gene3D" id="1.10.8.10">
    <property type="entry name" value="DNA helicase RuvA subunit, C-terminal domain"/>
    <property type="match status" value="1"/>
</dbReference>
<dbReference type="Gene3D" id="3.40.50.300">
    <property type="entry name" value="P-loop containing nucleotide triphosphate hydrolases"/>
    <property type="match status" value="2"/>
</dbReference>
<dbReference type="HAMAP" id="MF_00249">
    <property type="entry name" value="HslU"/>
    <property type="match status" value="1"/>
</dbReference>
<dbReference type="InterPro" id="IPR003593">
    <property type="entry name" value="AAA+_ATPase"/>
</dbReference>
<dbReference type="InterPro" id="IPR050052">
    <property type="entry name" value="ATP-dep_Clp_protease_ClpX"/>
</dbReference>
<dbReference type="InterPro" id="IPR003959">
    <property type="entry name" value="ATPase_AAA_core"/>
</dbReference>
<dbReference type="InterPro" id="IPR019489">
    <property type="entry name" value="Clp_ATPase_C"/>
</dbReference>
<dbReference type="InterPro" id="IPR004491">
    <property type="entry name" value="HslU"/>
</dbReference>
<dbReference type="InterPro" id="IPR027417">
    <property type="entry name" value="P-loop_NTPase"/>
</dbReference>
<dbReference type="NCBIfam" id="TIGR00390">
    <property type="entry name" value="hslU"/>
    <property type="match status" value="1"/>
</dbReference>
<dbReference type="NCBIfam" id="NF003544">
    <property type="entry name" value="PRK05201.1"/>
    <property type="match status" value="1"/>
</dbReference>
<dbReference type="PANTHER" id="PTHR48102">
    <property type="entry name" value="ATP-DEPENDENT CLP PROTEASE ATP-BINDING SUBUNIT CLPX-LIKE, MITOCHONDRIAL-RELATED"/>
    <property type="match status" value="1"/>
</dbReference>
<dbReference type="PANTHER" id="PTHR48102:SF3">
    <property type="entry name" value="ATP-DEPENDENT PROTEASE ATPASE SUBUNIT HSLU"/>
    <property type="match status" value="1"/>
</dbReference>
<dbReference type="Pfam" id="PF00004">
    <property type="entry name" value="AAA"/>
    <property type="match status" value="1"/>
</dbReference>
<dbReference type="Pfam" id="PF07724">
    <property type="entry name" value="AAA_2"/>
    <property type="match status" value="1"/>
</dbReference>
<dbReference type="SMART" id="SM00382">
    <property type="entry name" value="AAA"/>
    <property type="match status" value="1"/>
</dbReference>
<dbReference type="SMART" id="SM01086">
    <property type="entry name" value="ClpB_D2-small"/>
    <property type="match status" value="1"/>
</dbReference>
<dbReference type="SUPFAM" id="SSF52540">
    <property type="entry name" value="P-loop containing nucleoside triphosphate hydrolases"/>
    <property type="match status" value="1"/>
</dbReference>
<proteinExistence type="inferred from homology"/>
<keyword id="KW-0067">ATP-binding</keyword>
<keyword id="KW-0143">Chaperone</keyword>
<keyword id="KW-0963">Cytoplasm</keyword>
<keyword id="KW-0547">Nucleotide-binding</keyword>
<keyword id="KW-0346">Stress response</keyword>